<proteinExistence type="evidence at transcript level"/>
<accession>F1RCY6</accession>
<accession>A0A0R4IY20</accession>
<accession>Q7ZVZ4</accession>
<gene>
    <name evidence="11" type="primary">upf1</name>
    <name evidence="11" type="synonym">rent1</name>
</gene>
<feature type="chain" id="PRO_0000454185" description="Regulator of nonsense transcripts 1">
    <location>
        <begin position="1"/>
        <end position="1100"/>
    </location>
</feature>
<feature type="domain" description="Upf1 CH-rich" evidence="3">
    <location>
        <begin position="94"/>
        <end position="251"/>
    </location>
</feature>
<feature type="region of interest" description="Disordered" evidence="4">
    <location>
        <begin position="42"/>
        <end position="67"/>
    </location>
</feature>
<feature type="region of interest" description="C3H" evidence="3">
    <location>
        <begin position="102"/>
        <end position="134"/>
    </location>
</feature>
<feature type="region of interest" description="CC/SHH/C" evidence="3">
    <location>
        <begin position="116"/>
        <end position="144"/>
    </location>
</feature>
<feature type="region of interest" description="C4" evidence="3">
    <location>
        <begin position="162"/>
        <end position="192"/>
    </location>
</feature>
<feature type="region of interest" description="Disordered" evidence="4">
    <location>
        <begin position="978"/>
        <end position="1065"/>
    </location>
</feature>
<feature type="compositionally biased region" description="Low complexity" evidence="4">
    <location>
        <begin position="42"/>
        <end position="53"/>
    </location>
</feature>
<feature type="compositionally biased region" description="Low complexity" evidence="4">
    <location>
        <begin position="982"/>
        <end position="993"/>
    </location>
</feature>
<feature type="compositionally biased region" description="Polar residues" evidence="4">
    <location>
        <begin position="1012"/>
        <end position="1063"/>
    </location>
</feature>
<feature type="binding site" evidence="3">
    <location>
        <position position="102"/>
    </location>
    <ligand>
        <name>Zn(2+)</name>
        <dbReference type="ChEBI" id="CHEBI:29105"/>
        <label>1</label>
    </ligand>
</feature>
<feature type="binding site" evidence="3">
    <location>
        <position position="105"/>
    </location>
    <ligand>
        <name>Zn(2+)</name>
        <dbReference type="ChEBI" id="CHEBI:29105"/>
        <label>1</label>
    </ligand>
</feature>
<feature type="binding site" evidence="3">
    <location>
        <position position="116"/>
    </location>
    <ligand>
        <name>Zn(2+)</name>
        <dbReference type="ChEBI" id="CHEBI:29105"/>
        <label>2</label>
    </ligand>
</feature>
<feature type="binding site" evidence="3">
    <location>
        <position position="119"/>
    </location>
    <ligand>
        <name>Zn(2+)</name>
        <dbReference type="ChEBI" id="CHEBI:29105"/>
        <label>2</label>
    </ligand>
</feature>
<feature type="binding site" evidence="3">
    <location>
        <position position="124"/>
    </location>
    <ligand>
        <name>Zn(2+)</name>
        <dbReference type="ChEBI" id="CHEBI:29105"/>
        <label>1</label>
    </ligand>
</feature>
<feature type="binding site" evidence="3">
    <location>
        <position position="134"/>
    </location>
    <ligand>
        <name>Zn(2+)</name>
        <dbReference type="ChEBI" id="CHEBI:29105"/>
        <label>1</label>
    </ligand>
</feature>
<feature type="binding site" evidence="3">
    <location>
        <position position="138"/>
    </location>
    <ligand>
        <name>Zn(2+)</name>
        <dbReference type="ChEBI" id="CHEBI:29105"/>
        <label>2</label>
    </ligand>
</feature>
<feature type="binding site" evidence="3">
    <location>
        <position position="144"/>
    </location>
    <ligand>
        <name>Zn(2+)</name>
        <dbReference type="ChEBI" id="CHEBI:29105"/>
        <label>2</label>
    </ligand>
</feature>
<feature type="binding site" evidence="3">
    <location>
        <position position="162"/>
    </location>
    <ligand>
        <name>Zn(2+)</name>
        <dbReference type="ChEBI" id="CHEBI:29105"/>
        <label>3</label>
    </ligand>
</feature>
<feature type="binding site" evidence="3">
    <location>
        <position position="165"/>
    </location>
    <ligand>
        <name>Zn(2+)</name>
        <dbReference type="ChEBI" id="CHEBI:29105"/>
        <label>3</label>
    </ligand>
</feature>
<feature type="binding site" evidence="3">
    <location>
        <position position="188"/>
    </location>
    <ligand>
        <name>Zn(2+)</name>
        <dbReference type="ChEBI" id="CHEBI:29105"/>
        <label>3</label>
    </ligand>
</feature>
<feature type="binding site" evidence="3">
    <location>
        <position position="192"/>
    </location>
    <ligand>
        <name>Zn(2+)</name>
        <dbReference type="ChEBI" id="CHEBI:29105"/>
        <label>3</label>
    </ligand>
</feature>
<feature type="binding site" evidence="1">
    <location>
        <position position="455"/>
    </location>
    <ligand>
        <name>ATP</name>
        <dbReference type="ChEBI" id="CHEBI:30616"/>
    </ligand>
</feature>
<feature type="binding site" evidence="1">
    <location>
        <begin position="475"/>
        <end position="479"/>
    </location>
    <ligand>
        <name>ATP</name>
        <dbReference type="ChEBI" id="CHEBI:30616"/>
    </ligand>
</feature>
<feature type="binding site" evidence="1">
    <location>
        <position position="645"/>
    </location>
    <ligand>
        <name>ATP</name>
        <dbReference type="ChEBI" id="CHEBI:30616"/>
    </ligand>
</feature>
<feature type="binding site" evidence="1">
    <location>
        <position position="682"/>
    </location>
    <ligand>
        <name>ATP</name>
        <dbReference type="ChEBI" id="CHEBI:30616"/>
    </ligand>
</feature>
<feature type="binding site" evidence="1">
    <location>
        <position position="813"/>
    </location>
    <ligand>
        <name>ATP</name>
        <dbReference type="ChEBI" id="CHEBI:30616"/>
    </ligand>
</feature>
<feature type="sequence conflict" description="In Ref. 1; CAX18770 and 3; AAH45353." evidence="7" ref="1 3">
    <original>D</original>
    <variation>V</variation>
    <location>
        <position position="96"/>
    </location>
</feature>
<reference evidence="9" key="1">
    <citation type="journal article" date="2009" name="Mol. Cell. Biol.">
        <title>Nonsense-mediated mRNA decay effectors are essential for zebrafish embryonic development and survival.</title>
        <authorList>
            <person name="Wittkopp N."/>
            <person name="Huntzinger E."/>
            <person name="Weiler C."/>
            <person name="Sauliere J."/>
            <person name="Schmidt S."/>
            <person name="Sonawane M."/>
            <person name="Izaurralde E."/>
        </authorList>
    </citation>
    <scope>NUCLEOTIDE SEQUENCE [MRNA]</scope>
    <scope>FUNCTION</scope>
    <scope>DEVELOPMENTAL STAGE</scope>
    <scope>DISRUPTION PHENOTYPE</scope>
</reference>
<reference evidence="10" key="2">
    <citation type="journal article" date="2013" name="Nature">
        <title>The zebrafish reference genome sequence and its relationship to the human genome.</title>
        <authorList>
            <person name="Howe K."/>
            <person name="Clark M.D."/>
            <person name="Torroja C.F."/>
            <person name="Torrance J."/>
            <person name="Berthelot C."/>
            <person name="Muffato M."/>
            <person name="Collins J.E."/>
            <person name="Humphray S."/>
            <person name="McLaren K."/>
            <person name="Matthews L."/>
            <person name="McLaren S."/>
            <person name="Sealy I."/>
            <person name="Caccamo M."/>
            <person name="Churcher C."/>
            <person name="Scott C."/>
            <person name="Barrett J.C."/>
            <person name="Koch R."/>
            <person name="Rauch G.J."/>
            <person name="White S."/>
            <person name="Chow W."/>
            <person name="Kilian B."/>
            <person name="Quintais L.T."/>
            <person name="Guerra-Assuncao J.A."/>
            <person name="Zhou Y."/>
            <person name="Gu Y."/>
            <person name="Yen J."/>
            <person name="Vogel J.H."/>
            <person name="Eyre T."/>
            <person name="Redmond S."/>
            <person name="Banerjee R."/>
            <person name="Chi J."/>
            <person name="Fu B."/>
            <person name="Langley E."/>
            <person name="Maguire S.F."/>
            <person name="Laird G.K."/>
            <person name="Lloyd D."/>
            <person name="Kenyon E."/>
            <person name="Donaldson S."/>
            <person name="Sehra H."/>
            <person name="Almeida-King J."/>
            <person name="Loveland J."/>
            <person name="Trevanion S."/>
            <person name="Jones M."/>
            <person name="Quail M."/>
            <person name="Willey D."/>
            <person name="Hunt A."/>
            <person name="Burton J."/>
            <person name="Sims S."/>
            <person name="McLay K."/>
            <person name="Plumb B."/>
            <person name="Davis J."/>
            <person name="Clee C."/>
            <person name="Oliver K."/>
            <person name="Clark R."/>
            <person name="Riddle C."/>
            <person name="Elliot D."/>
            <person name="Threadgold G."/>
            <person name="Harden G."/>
            <person name="Ware D."/>
            <person name="Begum S."/>
            <person name="Mortimore B."/>
            <person name="Kerry G."/>
            <person name="Heath P."/>
            <person name="Phillimore B."/>
            <person name="Tracey A."/>
            <person name="Corby N."/>
            <person name="Dunn M."/>
            <person name="Johnson C."/>
            <person name="Wood J."/>
            <person name="Clark S."/>
            <person name="Pelan S."/>
            <person name="Griffiths G."/>
            <person name="Smith M."/>
            <person name="Glithero R."/>
            <person name="Howden P."/>
            <person name="Barker N."/>
            <person name="Lloyd C."/>
            <person name="Stevens C."/>
            <person name="Harley J."/>
            <person name="Holt K."/>
            <person name="Panagiotidis G."/>
            <person name="Lovell J."/>
            <person name="Beasley H."/>
            <person name="Henderson C."/>
            <person name="Gordon D."/>
            <person name="Auger K."/>
            <person name="Wright D."/>
            <person name="Collins J."/>
            <person name="Raisen C."/>
            <person name="Dyer L."/>
            <person name="Leung K."/>
            <person name="Robertson L."/>
            <person name="Ambridge K."/>
            <person name="Leongamornlert D."/>
            <person name="McGuire S."/>
            <person name="Gilderthorp R."/>
            <person name="Griffiths C."/>
            <person name="Manthravadi D."/>
            <person name="Nichol S."/>
            <person name="Barker G."/>
            <person name="Whitehead S."/>
            <person name="Kay M."/>
            <person name="Brown J."/>
            <person name="Murnane C."/>
            <person name="Gray E."/>
            <person name="Humphries M."/>
            <person name="Sycamore N."/>
            <person name="Barker D."/>
            <person name="Saunders D."/>
            <person name="Wallis J."/>
            <person name="Babbage A."/>
            <person name="Hammond S."/>
            <person name="Mashreghi-Mohammadi M."/>
            <person name="Barr L."/>
            <person name="Martin S."/>
            <person name="Wray P."/>
            <person name="Ellington A."/>
            <person name="Matthews N."/>
            <person name="Ellwood M."/>
            <person name="Woodmansey R."/>
            <person name="Clark G."/>
            <person name="Cooper J."/>
            <person name="Tromans A."/>
            <person name="Grafham D."/>
            <person name="Skuce C."/>
            <person name="Pandian R."/>
            <person name="Andrews R."/>
            <person name="Harrison E."/>
            <person name="Kimberley A."/>
            <person name="Garnett J."/>
            <person name="Fosker N."/>
            <person name="Hall R."/>
            <person name="Garner P."/>
            <person name="Kelly D."/>
            <person name="Bird C."/>
            <person name="Palmer S."/>
            <person name="Gehring I."/>
            <person name="Berger A."/>
            <person name="Dooley C.M."/>
            <person name="Ersan-Urun Z."/>
            <person name="Eser C."/>
            <person name="Geiger H."/>
            <person name="Geisler M."/>
            <person name="Karotki L."/>
            <person name="Kirn A."/>
            <person name="Konantz J."/>
            <person name="Konantz M."/>
            <person name="Oberlander M."/>
            <person name="Rudolph-Geiger S."/>
            <person name="Teucke M."/>
            <person name="Lanz C."/>
            <person name="Raddatz G."/>
            <person name="Osoegawa K."/>
            <person name="Zhu B."/>
            <person name="Rapp A."/>
            <person name="Widaa S."/>
            <person name="Langford C."/>
            <person name="Yang F."/>
            <person name="Schuster S.C."/>
            <person name="Carter N.P."/>
            <person name="Harrow J."/>
            <person name="Ning Z."/>
            <person name="Herrero J."/>
            <person name="Searle S.M."/>
            <person name="Enright A."/>
            <person name="Geisler R."/>
            <person name="Plasterk R.H."/>
            <person name="Lee C."/>
            <person name="Westerfield M."/>
            <person name="de Jong P.J."/>
            <person name="Zon L.I."/>
            <person name="Postlethwait J.H."/>
            <person name="Nusslein-Volhard C."/>
            <person name="Hubbard T.J."/>
            <person name="Roest Crollius H."/>
            <person name="Rogers J."/>
            <person name="Stemple D.L."/>
        </authorList>
    </citation>
    <scope>NUCLEOTIDE SEQUENCE [LARGE SCALE GENOMIC DNA]</scope>
    <source>
        <strain evidence="10">Tuebingen</strain>
    </source>
</reference>
<reference evidence="8" key="3">
    <citation type="submission" date="2003-01" db="EMBL/GenBank/DDBJ databases">
        <authorList>
            <consortium name="NIH - Zebrafish Gene Collection (ZGC) project"/>
        </authorList>
    </citation>
    <scope>NUCLEOTIDE SEQUENCE [LARGE SCALE MRNA]</scope>
    <source>
        <strain evidence="8">AB</strain>
        <tissue evidence="8">Embryo</tissue>
    </source>
</reference>
<reference evidence="7" key="4">
    <citation type="journal article" date="2011" name="Nucleic Acids Res.">
        <title>Dhx34 and Nbas function in the NMD pathway and are required for embryonic development in zebrafish.</title>
        <authorList>
            <person name="Anastasaki C."/>
            <person name="Longman D."/>
            <person name="Capper A."/>
            <person name="Patton E.E."/>
            <person name="Caceres J.F."/>
        </authorList>
    </citation>
    <scope>FUNCTION</scope>
    <scope>DISRUPTION PHENOTYPE</scope>
</reference>
<evidence type="ECO:0000250" key="1">
    <source>
        <dbReference type="UniProtKB" id="Q92900"/>
    </source>
</evidence>
<evidence type="ECO:0000250" key="2">
    <source>
        <dbReference type="UniProtKB" id="Q9EPU0"/>
    </source>
</evidence>
<evidence type="ECO:0000255" key="3">
    <source>
        <dbReference type="PROSITE-ProRule" id="PRU01341"/>
    </source>
</evidence>
<evidence type="ECO:0000256" key="4">
    <source>
        <dbReference type="SAM" id="MobiDB-lite"/>
    </source>
</evidence>
<evidence type="ECO:0000269" key="5">
    <source>
    </source>
</evidence>
<evidence type="ECO:0000269" key="6">
    <source>
    </source>
</evidence>
<evidence type="ECO:0000305" key="7"/>
<evidence type="ECO:0000312" key="8">
    <source>
        <dbReference type="EMBL" id="AAH45353.1"/>
    </source>
</evidence>
<evidence type="ECO:0000312" key="9">
    <source>
        <dbReference type="EMBL" id="CAX18770.1"/>
    </source>
</evidence>
<evidence type="ECO:0000312" key="10">
    <source>
        <dbReference type="Proteomes" id="UP000000437"/>
    </source>
</evidence>
<evidence type="ECO:0000312" key="11">
    <source>
        <dbReference type="ZFIN" id="ZDB-GENE-040426-2836"/>
    </source>
</evidence>
<comment type="function">
    <text evidence="1">RNA-dependent helicase and ATPase required for nonsense-mediated decay (NMD) of mRNAs containing premature stop codons. Is recruited to mRNAs upon translation termination and undergoes a cycle of phosphorylation and dephosphorylation; its phosphorylation appears to be a key step in NMD. The formation of an upf1-upf2-upf3 surveillance complex is believed to activate NMD.</text>
</comment>
<comment type="subcellular location">
    <subcellularLocation>
        <location evidence="2">Cytoplasm</location>
    </subcellularLocation>
    <subcellularLocation>
        <location evidence="1">Cytoplasm</location>
        <location evidence="1">P-body</location>
    </subcellularLocation>
    <subcellularLocation>
        <location evidence="1">Nucleus</location>
    </subcellularLocation>
    <subcellularLocation>
        <location evidence="2">Cytoplasm</location>
        <location evidence="2">Perinuclear region</location>
    </subcellularLocation>
</comment>
<comment type="developmental stage">
    <text evidence="5">Expressed during early cleavage, gastrulation and at 1 day post-fertilization.</text>
</comment>
<comment type="disruption phenotype">
    <text evidence="5 6">Morpholino knockdown leads to both intermediate and severe phenotypes of abnormal embryonic development (PubMed:19414594, PubMed:21227923). Intermediate phenotypes show developmental delay, including aberrant formation of the head, tail, eye placodes and somites (PubMed:19414594, PubMed:21227923). Severe phenotypes show severe developmental arrest, including yolk extension defects, and lack of recognizable morphological development (PubMed:19414594, PubMed:21227923). High mortality rates of 80% to 85% at 5 days post-fertilization (PubMed:19414594). Increase in premature stop codon containing slc24a5 mRNA transcript levels in melanocytes (PubMed:19414594, PubMed:21227923).</text>
</comment>
<comment type="similarity">
    <text evidence="1">Belongs to the DNA2/NAM7 helicase family.</text>
</comment>
<organism evidence="10">
    <name type="scientific">Danio rerio</name>
    <name type="common">Zebrafish</name>
    <name type="synonym">Brachydanio rerio</name>
    <dbReference type="NCBI Taxonomy" id="7955"/>
    <lineage>
        <taxon>Eukaryota</taxon>
        <taxon>Metazoa</taxon>
        <taxon>Chordata</taxon>
        <taxon>Craniata</taxon>
        <taxon>Vertebrata</taxon>
        <taxon>Euteleostomi</taxon>
        <taxon>Actinopterygii</taxon>
        <taxon>Neopterygii</taxon>
        <taxon>Teleostei</taxon>
        <taxon>Ostariophysi</taxon>
        <taxon>Cypriniformes</taxon>
        <taxon>Danionidae</taxon>
        <taxon>Danioninae</taxon>
        <taxon>Danio</taxon>
    </lineage>
</organism>
<dbReference type="EC" id="3.6.4.-"/>
<dbReference type="EMBL" id="FM986817">
    <property type="protein sequence ID" value="CAX18770.1"/>
    <property type="molecule type" value="mRNA"/>
</dbReference>
<dbReference type="EMBL" id="CR931779">
    <property type="status" value="NOT_ANNOTATED_CDS"/>
    <property type="molecule type" value="Genomic_DNA"/>
</dbReference>
<dbReference type="EMBL" id="CU693375">
    <property type="status" value="NOT_ANNOTATED_CDS"/>
    <property type="molecule type" value="Genomic_DNA"/>
</dbReference>
<dbReference type="EMBL" id="BC045353">
    <property type="protein sequence ID" value="AAH45353.1"/>
    <property type="molecule type" value="mRNA"/>
</dbReference>
<dbReference type="RefSeq" id="NP_998639.1">
    <property type="nucleotide sequence ID" value="NM_213474.1"/>
</dbReference>
<dbReference type="SMR" id="F1RCY6"/>
<dbReference type="FunCoup" id="F1RCY6">
    <property type="interactions" value="3122"/>
</dbReference>
<dbReference type="STRING" id="7955.ENSDARP00000153550"/>
<dbReference type="PaxDb" id="7955-ENSDARP00000013006"/>
<dbReference type="Ensembl" id="ENSDART00000021011">
    <property type="protein sequence ID" value="ENSDARP00000013006"/>
    <property type="gene ID" value="ENSDARG00000016302"/>
</dbReference>
<dbReference type="Ensembl" id="ENSDART00000180271">
    <property type="protein sequence ID" value="ENSDARP00000153550"/>
    <property type="gene ID" value="ENSDARG00000016302"/>
</dbReference>
<dbReference type="GeneID" id="406783"/>
<dbReference type="KEGG" id="dre:406783"/>
<dbReference type="AGR" id="ZFIN:ZDB-GENE-040426-2836"/>
<dbReference type="CTD" id="5976"/>
<dbReference type="ZFIN" id="ZDB-GENE-040426-2836">
    <property type="gene designation" value="upf1"/>
</dbReference>
<dbReference type="eggNOG" id="KOG1802">
    <property type="taxonomic scope" value="Eukaryota"/>
</dbReference>
<dbReference type="HOGENOM" id="CLU_001666_4_3_1"/>
<dbReference type="InParanoid" id="F1RCY6"/>
<dbReference type="OMA" id="QYMQMNG"/>
<dbReference type="OrthoDB" id="6513042at2759"/>
<dbReference type="PhylomeDB" id="F1RCY6"/>
<dbReference type="TreeFam" id="TF300554"/>
<dbReference type="Reactome" id="R-DRE-400206">
    <property type="pathway name" value="Regulation of lipid metabolism by PPARalpha"/>
</dbReference>
<dbReference type="Reactome" id="R-DRE-9707564">
    <property type="pathway name" value="Cytoprotection by HMOX1"/>
</dbReference>
<dbReference type="Reactome" id="R-DRE-975956">
    <property type="pathway name" value="Nonsense Mediated Decay (NMD) independent of the Exon Junction Complex (EJC)"/>
</dbReference>
<dbReference type="Reactome" id="R-DRE-975957">
    <property type="pathway name" value="Nonsense Mediated Decay (NMD) enhanced by the Exon Junction Complex (EJC)"/>
</dbReference>
<dbReference type="PRO" id="PR:F1RCY6"/>
<dbReference type="Proteomes" id="UP000000437">
    <property type="component" value="Chromosome 2"/>
</dbReference>
<dbReference type="Bgee" id="ENSDARG00000016302">
    <property type="expression patterns" value="Expressed in pharyngeal gill and 28 other cell types or tissues"/>
</dbReference>
<dbReference type="ExpressionAtlas" id="F1RCY6">
    <property type="expression patterns" value="baseline"/>
</dbReference>
<dbReference type="GO" id="GO:0005737">
    <property type="term" value="C:cytoplasm"/>
    <property type="evidence" value="ECO:0000318"/>
    <property type="project" value="GO_Central"/>
</dbReference>
<dbReference type="GO" id="GO:0005634">
    <property type="term" value="C:nucleus"/>
    <property type="evidence" value="ECO:0007669"/>
    <property type="project" value="UniProtKB-SubCell"/>
</dbReference>
<dbReference type="GO" id="GO:0000932">
    <property type="term" value="C:P-body"/>
    <property type="evidence" value="ECO:0007669"/>
    <property type="project" value="UniProtKB-SubCell"/>
</dbReference>
<dbReference type="GO" id="GO:0048471">
    <property type="term" value="C:perinuclear region of cytoplasm"/>
    <property type="evidence" value="ECO:0007669"/>
    <property type="project" value="UniProtKB-SubCell"/>
</dbReference>
<dbReference type="GO" id="GO:0005524">
    <property type="term" value="F:ATP binding"/>
    <property type="evidence" value="ECO:0007669"/>
    <property type="project" value="UniProtKB-KW"/>
</dbReference>
<dbReference type="GO" id="GO:0003677">
    <property type="term" value="F:DNA binding"/>
    <property type="evidence" value="ECO:0007669"/>
    <property type="project" value="InterPro"/>
</dbReference>
<dbReference type="GO" id="GO:0016787">
    <property type="term" value="F:hydrolase activity"/>
    <property type="evidence" value="ECO:0007669"/>
    <property type="project" value="UniProtKB-KW"/>
</dbReference>
<dbReference type="GO" id="GO:0003723">
    <property type="term" value="F:RNA binding"/>
    <property type="evidence" value="ECO:0000318"/>
    <property type="project" value="GO_Central"/>
</dbReference>
<dbReference type="GO" id="GO:0003724">
    <property type="term" value="F:RNA helicase activity"/>
    <property type="evidence" value="ECO:0000318"/>
    <property type="project" value="GO_Central"/>
</dbReference>
<dbReference type="GO" id="GO:0008270">
    <property type="term" value="F:zinc ion binding"/>
    <property type="evidence" value="ECO:0007669"/>
    <property type="project" value="UniProtKB-KW"/>
</dbReference>
<dbReference type="GO" id="GO:0043009">
    <property type="term" value="P:chordate embryonic development"/>
    <property type="evidence" value="ECO:0000315"/>
    <property type="project" value="UniProtKB"/>
</dbReference>
<dbReference type="GO" id="GO:0000956">
    <property type="term" value="P:nuclear-transcribed mRNA catabolic process"/>
    <property type="evidence" value="ECO:0000315"/>
    <property type="project" value="UniProtKB"/>
</dbReference>
<dbReference type="GO" id="GO:0000184">
    <property type="term" value="P:nuclear-transcribed mRNA catabolic process, nonsense-mediated decay"/>
    <property type="evidence" value="ECO:0000315"/>
    <property type="project" value="UniProtKB"/>
</dbReference>
<dbReference type="GO" id="GO:2000624">
    <property type="term" value="P:positive regulation of nuclear-transcribed mRNA catabolic process, nonsense-mediated decay"/>
    <property type="evidence" value="ECO:0000315"/>
    <property type="project" value="ZFIN"/>
</dbReference>
<dbReference type="GO" id="GO:0010468">
    <property type="term" value="P:regulation of gene expression"/>
    <property type="evidence" value="ECO:0000315"/>
    <property type="project" value="ZFIN"/>
</dbReference>
<dbReference type="GO" id="GO:0033077">
    <property type="term" value="P:T cell differentiation in thymus"/>
    <property type="evidence" value="ECO:0000315"/>
    <property type="project" value="ZFIN"/>
</dbReference>
<dbReference type="CDD" id="cd21407">
    <property type="entry name" value="1B_UPF1-like"/>
    <property type="match status" value="1"/>
</dbReference>
<dbReference type="CDD" id="cd18039">
    <property type="entry name" value="DEXXQc_UPF1"/>
    <property type="match status" value="1"/>
</dbReference>
<dbReference type="CDD" id="cd18808">
    <property type="entry name" value="SF1_C_Upf1"/>
    <property type="match status" value="1"/>
</dbReference>
<dbReference type="CDD" id="cd21400">
    <property type="entry name" value="ZBD_UPF1-like"/>
    <property type="match status" value="1"/>
</dbReference>
<dbReference type="FunFam" id="2.40.30.230:FF:000001">
    <property type="entry name" value="Regulator of nonsense transcripts 1"/>
    <property type="match status" value="1"/>
</dbReference>
<dbReference type="FunFam" id="3.40.50.300:FF:000097">
    <property type="entry name" value="Regulator of nonsense transcripts 1"/>
    <property type="match status" value="1"/>
</dbReference>
<dbReference type="Gene3D" id="2.40.30.230">
    <property type="match status" value="1"/>
</dbReference>
<dbReference type="Gene3D" id="6.10.140.1240">
    <property type="match status" value="1"/>
</dbReference>
<dbReference type="Gene3D" id="3.40.50.300">
    <property type="entry name" value="P-loop containing nucleotide triphosphate hydrolases"/>
    <property type="match status" value="2"/>
</dbReference>
<dbReference type="InterPro" id="IPR045055">
    <property type="entry name" value="DNA2/NAM7-like"/>
</dbReference>
<dbReference type="InterPro" id="IPR041679">
    <property type="entry name" value="DNA2/NAM7-like_C"/>
</dbReference>
<dbReference type="InterPro" id="IPR041677">
    <property type="entry name" value="DNA2/NAM7_AAA_11"/>
</dbReference>
<dbReference type="InterPro" id="IPR006935">
    <property type="entry name" value="Helicase/UvrB_N"/>
</dbReference>
<dbReference type="InterPro" id="IPR027417">
    <property type="entry name" value="P-loop_NTPase"/>
</dbReference>
<dbReference type="InterPro" id="IPR047187">
    <property type="entry name" value="SF1_C_Upf1"/>
</dbReference>
<dbReference type="InterPro" id="IPR040812">
    <property type="entry name" value="UPF1_1B_dom"/>
</dbReference>
<dbReference type="InterPro" id="IPR018999">
    <property type="entry name" value="UPF1_CH/ZBD"/>
</dbReference>
<dbReference type="PANTHER" id="PTHR10887">
    <property type="entry name" value="DNA2/NAM7 HELICASE FAMILY"/>
    <property type="match status" value="1"/>
</dbReference>
<dbReference type="PANTHER" id="PTHR10887:SF364">
    <property type="entry name" value="REGULATOR OF NONSENSE TRANSCRIPTS 1"/>
    <property type="match status" value="1"/>
</dbReference>
<dbReference type="Pfam" id="PF13086">
    <property type="entry name" value="AAA_11"/>
    <property type="match status" value="1"/>
</dbReference>
<dbReference type="Pfam" id="PF13087">
    <property type="entry name" value="AAA_12"/>
    <property type="match status" value="1"/>
</dbReference>
<dbReference type="Pfam" id="PF04851">
    <property type="entry name" value="ResIII"/>
    <property type="match status" value="1"/>
</dbReference>
<dbReference type="Pfam" id="PF18141">
    <property type="entry name" value="UPF1_1B_dom"/>
    <property type="match status" value="1"/>
</dbReference>
<dbReference type="Pfam" id="PF09416">
    <property type="entry name" value="UPF1_Zn_bind"/>
    <property type="match status" value="1"/>
</dbReference>
<dbReference type="SUPFAM" id="SSF52540">
    <property type="entry name" value="P-loop containing nucleoside triphosphate hydrolases"/>
    <property type="match status" value="1"/>
</dbReference>
<dbReference type="PROSITE" id="PS51997">
    <property type="entry name" value="UPF1_CH_RICH"/>
    <property type="match status" value="1"/>
</dbReference>
<keyword id="KW-0067">ATP-binding</keyword>
<keyword id="KW-0963">Cytoplasm</keyword>
<keyword id="KW-0347">Helicase</keyword>
<keyword id="KW-0378">Hydrolase</keyword>
<keyword id="KW-0479">Metal-binding</keyword>
<keyword id="KW-0488">Methylation</keyword>
<keyword id="KW-0866">Nonsense-mediated mRNA decay</keyword>
<keyword id="KW-0547">Nucleotide-binding</keyword>
<keyword id="KW-0539">Nucleus</keyword>
<keyword id="KW-1185">Reference proteome</keyword>
<keyword id="KW-0694">RNA-binding</keyword>
<keyword id="KW-0862">Zinc</keyword>
<keyword id="KW-0863">Zinc-finger</keyword>
<protein>
    <recommendedName>
        <fullName evidence="1">Regulator of nonsense transcripts 1</fullName>
        <ecNumber>3.6.4.-</ecNumber>
    </recommendedName>
    <alternativeName>
        <fullName evidence="2">ATP-dependent helicase RENT1</fullName>
    </alternativeName>
    <alternativeName>
        <fullName evidence="1">Nonsense mRNA reducing factor 1</fullName>
        <shortName evidence="1">NORF1</shortName>
    </alternativeName>
    <alternativeName>
        <fullName evidence="1">Up-frameshift suppressor 1 homolog</fullName>
    </alternativeName>
</protein>
<name>RENT1_DANRE</name>
<sequence length="1100" mass="122079">MSVEAYGPSSQTLTFLDTEEAELLGADTQGSEFEFTDFTLPSQTQTQGQTQSQLDNQVNGPDGVLPNGEDAVGKTSQLLAELNFEEDEEDTYYTKDLPVHACSYCGIHDPACVVYCNTSKKWFCNGRGNTSGSHIVNHLVRAKCKEVTLHKDGPLGETVLECYNCGCRNVFLLGFIPAKADSVVVLLCRQPCASQSSLKDINWDSSQWQPLIQDRCFLSWLVKIPSEQEQLRARQITAQQINKLEELWKENPTATLEDLEKPGVDEEPQHVLLRYEDAYQYQNIFGPLVKLEADYDKKLKESQTQDNITVRWDLGLNKKRIAYFTLPKTDSGDMRLMQGDEICLRYKGDMAPLWKGIGHVIKVPDNYGDEIAIELRSSAGAPVEVPHNFQVDFVWKSTSFDRMQSALKTFAVDETSVSGYIYHKLLGHEVEDVIIKCQLPKRFTAQGLPDLNHSQVYAVKTVLQRPLSLIQGPPGTGKTVTSATIVYHLARQGNGPVLVCAPSNIAVDQLTEKIHQTGLKVVRLCAKSREAIDSPVSFLALHNQIRNMDSMPELQKLQQLKDETGELSSSDEKRYRALKRTAERELLMNADVICCTCVGAGDPRLAKMQFRSILIDESTQATEPECMVPVVLGAKQLILVGDHCQLGPVVMCKKAAKAGLSQSLFERLVVLGIRPIRLQVQYRMHPALSAFPSNIFYEGSLQNGVTAADRLKKGFDFQWPQPDKPMFFYVTQGQEEIASSGTSYLNRTEAANVEKITTRLLKAGAKPDQIGIITPYEGQRSYLVQYMQFSGSLHTKLYQEVEIASVDAFQGREKDFIILSCVRANEHQGIGFLNDPRRLNVALTRARYGVIIVGNPKALSKQPLWNHLLNYYKEQKVLVEGPLNNLRESLMQFSKPRKLVNTINPGARFMSTAMYDAREAMIPGSVYDRSSTGRPSNMYFQTHDQVGMIGTGPNPMGSLNIPIPFNLVMPPMPPPGYLGQVNGPAAGRGAPKGKTGGRGGRQRNRGTGNHGSGQPNMPNSQASQDLVSQPFSQGPLTQGYITMSQPSQMSQPGLSQPELSQDSYLGDEFKSQMDVALSQDSTYQGERAYQHGGVTGLSQY</sequence>